<organism>
    <name type="scientific">Oenococcus oeni (strain ATCC BAA-331 / PSU-1)</name>
    <dbReference type="NCBI Taxonomy" id="203123"/>
    <lineage>
        <taxon>Bacteria</taxon>
        <taxon>Bacillati</taxon>
        <taxon>Bacillota</taxon>
        <taxon>Bacilli</taxon>
        <taxon>Lactobacillales</taxon>
        <taxon>Lactobacillaceae</taxon>
        <taxon>Oenococcus</taxon>
    </lineage>
</organism>
<evidence type="ECO:0000255" key="1">
    <source>
        <dbReference type="HAMAP-Rule" id="MF_00377"/>
    </source>
</evidence>
<feature type="chain" id="PRO_1000060016" description="Chromosomal replication initiator protein DnaA">
    <location>
        <begin position="1"/>
        <end position="450"/>
    </location>
</feature>
<feature type="region of interest" description="Domain I, interacts with DnaA modulators" evidence="1">
    <location>
        <begin position="1"/>
        <end position="79"/>
    </location>
</feature>
<feature type="region of interest" description="Domain II" evidence="1">
    <location>
        <begin position="79"/>
        <end position="112"/>
    </location>
</feature>
<feature type="region of interest" description="Domain III, AAA+ region" evidence="1">
    <location>
        <begin position="113"/>
        <end position="329"/>
    </location>
</feature>
<feature type="region of interest" description="Domain IV, binds dsDNA" evidence="1">
    <location>
        <begin position="330"/>
        <end position="450"/>
    </location>
</feature>
<feature type="binding site" evidence="1">
    <location>
        <position position="157"/>
    </location>
    <ligand>
        <name>ATP</name>
        <dbReference type="ChEBI" id="CHEBI:30616"/>
    </ligand>
</feature>
<feature type="binding site" evidence="1">
    <location>
        <position position="159"/>
    </location>
    <ligand>
        <name>ATP</name>
        <dbReference type="ChEBI" id="CHEBI:30616"/>
    </ligand>
</feature>
<feature type="binding site" evidence="1">
    <location>
        <position position="160"/>
    </location>
    <ligand>
        <name>ATP</name>
        <dbReference type="ChEBI" id="CHEBI:30616"/>
    </ligand>
</feature>
<feature type="binding site" evidence="1">
    <location>
        <position position="161"/>
    </location>
    <ligand>
        <name>ATP</name>
        <dbReference type="ChEBI" id="CHEBI:30616"/>
    </ligand>
</feature>
<comment type="function">
    <text evidence="1">Plays an essential role in the initiation and regulation of chromosomal replication. ATP-DnaA binds to the origin of replication (oriC) to initiate formation of the DNA replication initiation complex once per cell cycle. Binds the DnaA box (a 9 base pair repeat at the origin) and separates the double-stranded (ds)DNA. Forms a right-handed helical filament on oriC DNA; dsDNA binds to the exterior of the filament while single-stranded (ss)DNA is stabiized in the filament's interior. The ATP-DnaA-oriC complex binds and stabilizes one strand of the AT-rich DNA unwinding element (DUE), permitting loading of DNA polymerase. After initiation quickly degrades to an ADP-DnaA complex that is not apt for DNA replication. Binds acidic phospholipids.</text>
</comment>
<comment type="subunit">
    <text evidence="1">Oligomerizes as a right-handed, spiral filament on DNA at oriC.</text>
</comment>
<comment type="subcellular location">
    <subcellularLocation>
        <location evidence="1">Cytoplasm</location>
    </subcellularLocation>
</comment>
<comment type="domain">
    <text evidence="1">Domain I is involved in oligomerization and binding regulators, domain II is flexibile and of varying length in different bacteria, domain III forms the AAA+ region, while domain IV binds dsDNA.</text>
</comment>
<comment type="similarity">
    <text evidence="1">Belongs to the DnaA family.</text>
</comment>
<protein>
    <recommendedName>
        <fullName evidence="1">Chromosomal replication initiator protein DnaA</fullName>
    </recommendedName>
</protein>
<reference key="1">
    <citation type="journal article" date="2006" name="Proc. Natl. Acad. Sci. U.S.A.">
        <title>Comparative genomics of the lactic acid bacteria.</title>
        <authorList>
            <person name="Makarova K.S."/>
            <person name="Slesarev A."/>
            <person name="Wolf Y.I."/>
            <person name="Sorokin A."/>
            <person name="Mirkin B."/>
            <person name="Koonin E.V."/>
            <person name="Pavlov A."/>
            <person name="Pavlova N."/>
            <person name="Karamychev V."/>
            <person name="Polouchine N."/>
            <person name="Shakhova V."/>
            <person name="Grigoriev I."/>
            <person name="Lou Y."/>
            <person name="Rohksar D."/>
            <person name="Lucas S."/>
            <person name="Huang K."/>
            <person name="Goodstein D.M."/>
            <person name="Hawkins T."/>
            <person name="Plengvidhya V."/>
            <person name="Welker D."/>
            <person name="Hughes J."/>
            <person name="Goh Y."/>
            <person name="Benson A."/>
            <person name="Baldwin K."/>
            <person name="Lee J.-H."/>
            <person name="Diaz-Muniz I."/>
            <person name="Dosti B."/>
            <person name="Smeianov V."/>
            <person name="Wechter W."/>
            <person name="Barabote R."/>
            <person name="Lorca G."/>
            <person name="Altermann E."/>
            <person name="Barrangou R."/>
            <person name="Ganesan B."/>
            <person name="Xie Y."/>
            <person name="Rawsthorne H."/>
            <person name="Tamir D."/>
            <person name="Parker C."/>
            <person name="Breidt F."/>
            <person name="Broadbent J.R."/>
            <person name="Hutkins R."/>
            <person name="O'Sullivan D."/>
            <person name="Steele J."/>
            <person name="Unlu G."/>
            <person name="Saier M.H. Jr."/>
            <person name="Klaenhammer T."/>
            <person name="Richardson P."/>
            <person name="Kozyavkin S."/>
            <person name="Weimer B.C."/>
            <person name="Mills D.A."/>
        </authorList>
    </citation>
    <scope>NUCLEOTIDE SEQUENCE [LARGE SCALE GENOMIC DNA]</scope>
    <source>
        <strain>ATCC BAA-331 / PSU-1</strain>
    </source>
</reference>
<sequence length="450" mass="50901">MKDSYFDLNTFWKGIQGRFAANMGETAYENWIKPVRAVKVDLANRTVELQAPNDIVMQAWDNGNYTAKFMEYAYDVAHDFFKPELKVIKVVANPVNNQKSNQSNSDFVATDYQLNQNFTFDTWVIGDANELATSAAMAVSEQPGRQYNPLLIYGSSGLGKTHLMEAIGNRLKELQPDAIVRYITTDDFMNDWVNAISKKTTADFTSTYENVDLLLVDDIQMLQGKDRFQEEFFNIFNKITKSQKQIVMTSDVLPKDIPGLNARLVSRFMQGVAYDIQKPDFPTRLAILKNKSEEVGISIDNQTLTLIAEQIDTNVRELEGAFNTLTLMARAGRPINVSNAQKILEHLNITRQKVITLPDIQKTVADDYNVSINDLIGKKRNSDIVLPRQVAMYLIRTLTDTSLPKIGQAFGGRDHTTVMHGTEKIADLIETDYALKQRIENLSTKIKEKS</sequence>
<accession>Q04HR6</accession>
<dbReference type="EMBL" id="CP000411">
    <property type="protein sequence ID" value="ABJ56006.1"/>
    <property type="molecule type" value="Genomic_DNA"/>
</dbReference>
<dbReference type="RefSeq" id="WP_002817930.1">
    <property type="nucleotide sequence ID" value="NC_008528.1"/>
</dbReference>
<dbReference type="SMR" id="Q04HR6"/>
<dbReference type="STRING" id="203123.OEOE_0001"/>
<dbReference type="GeneID" id="75064853"/>
<dbReference type="KEGG" id="ooe:OEOE_0001"/>
<dbReference type="eggNOG" id="COG0593">
    <property type="taxonomic scope" value="Bacteria"/>
</dbReference>
<dbReference type="HOGENOM" id="CLU_026910_3_1_9"/>
<dbReference type="Proteomes" id="UP000000774">
    <property type="component" value="Chromosome"/>
</dbReference>
<dbReference type="GO" id="GO:0005737">
    <property type="term" value="C:cytoplasm"/>
    <property type="evidence" value="ECO:0007669"/>
    <property type="project" value="UniProtKB-SubCell"/>
</dbReference>
<dbReference type="GO" id="GO:0005886">
    <property type="term" value="C:plasma membrane"/>
    <property type="evidence" value="ECO:0007669"/>
    <property type="project" value="TreeGrafter"/>
</dbReference>
<dbReference type="GO" id="GO:0005524">
    <property type="term" value="F:ATP binding"/>
    <property type="evidence" value="ECO:0007669"/>
    <property type="project" value="UniProtKB-UniRule"/>
</dbReference>
<dbReference type="GO" id="GO:0016887">
    <property type="term" value="F:ATP hydrolysis activity"/>
    <property type="evidence" value="ECO:0007669"/>
    <property type="project" value="InterPro"/>
</dbReference>
<dbReference type="GO" id="GO:0003688">
    <property type="term" value="F:DNA replication origin binding"/>
    <property type="evidence" value="ECO:0007669"/>
    <property type="project" value="UniProtKB-UniRule"/>
</dbReference>
<dbReference type="GO" id="GO:0008289">
    <property type="term" value="F:lipid binding"/>
    <property type="evidence" value="ECO:0007669"/>
    <property type="project" value="UniProtKB-KW"/>
</dbReference>
<dbReference type="GO" id="GO:0006270">
    <property type="term" value="P:DNA replication initiation"/>
    <property type="evidence" value="ECO:0007669"/>
    <property type="project" value="UniProtKB-UniRule"/>
</dbReference>
<dbReference type="GO" id="GO:0006275">
    <property type="term" value="P:regulation of DNA replication"/>
    <property type="evidence" value="ECO:0007669"/>
    <property type="project" value="UniProtKB-UniRule"/>
</dbReference>
<dbReference type="CDD" id="cd00009">
    <property type="entry name" value="AAA"/>
    <property type="match status" value="1"/>
</dbReference>
<dbReference type="CDD" id="cd06571">
    <property type="entry name" value="Bac_DnaA_C"/>
    <property type="match status" value="1"/>
</dbReference>
<dbReference type="FunFam" id="1.10.1750.10:FF:000002">
    <property type="entry name" value="Chromosomal replication initiator protein DnaA"/>
    <property type="match status" value="1"/>
</dbReference>
<dbReference type="FunFam" id="3.40.50.300:FF:000668">
    <property type="entry name" value="Chromosomal replication initiator protein DnaA"/>
    <property type="match status" value="1"/>
</dbReference>
<dbReference type="Gene3D" id="1.10.1750.10">
    <property type="match status" value="1"/>
</dbReference>
<dbReference type="Gene3D" id="1.10.8.60">
    <property type="match status" value="1"/>
</dbReference>
<dbReference type="Gene3D" id="3.30.300.180">
    <property type="match status" value="1"/>
</dbReference>
<dbReference type="Gene3D" id="3.40.50.300">
    <property type="entry name" value="P-loop containing nucleotide triphosphate hydrolases"/>
    <property type="match status" value="1"/>
</dbReference>
<dbReference type="HAMAP" id="MF_00377">
    <property type="entry name" value="DnaA_bact"/>
    <property type="match status" value="1"/>
</dbReference>
<dbReference type="InterPro" id="IPR003593">
    <property type="entry name" value="AAA+_ATPase"/>
</dbReference>
<dbReference type="InterPro" id="IPR001957">
    <property type="entry name" value="Chromosome_initiator_DnaA"/>
</dbReference>
<dbReference type="InterPro" id="IPR020591">
    <property type="entry name" value="Chromosome_initiator_DnaA-like"/>
</dbReference>
<dbReference type="InterPro" id="IPR018312">
    <property type="entry name" value="Chromosome_initiator_DnaA_CS"/>
</dbReference>
<dbReference type="InterPro" id="IPR013159">
    <property type="entry name" value="DnaA_C"/>
</dbReference>
<dbReference type="InterPro" id="IPR013317">
    <property type="entry name" value="DnaA_dom"/>
</dbReference>
<dbReference type="InterPro" id="IPR024633">
    <property type="entry name" value="DnaA_N_dom"/>
</dbReference>
<dbReference type="InterPro" id="IPR038454">
    <property type="entry name" value="DnaA_N_sf"/>
</dbReference>
<dbReference type="InterPro" id="IPR027417">
    <property type="entry name" value="P-loop_NTPase"/>
</dbReference>
<dbReference type="InterPro" id="IPR010921">
    <property type="entry name" value="Trp_repressor/repl_initiator"/>
</dbReference>
<dbReference type="NCBIfam" id="TIGR00362">
    <property type="entry name" value="DnaA"/>
    <property type="match status" value="1"/>
</dbReference>
<dbReference type="PANTHER" id="PTHR30050">
    <property type="entry name" value="CHROMOSOMAL REPLICATION INITIATOR PROTEIN DNAA"/>
    <property type="match status" value="1"/>
</dbReference>
<dbReference type="PANTHER" id="PTHR30050:SF2">
    <property type="entry name" value="CHROMOSOMAL REPLICATION INITIATOR PROTEIN DNAA"/>
    <property type="match status" value="1"/>
</dbReference>
<dbReference type="Pfam" id="PF00308">
    <property type="entry name" value="Bac_DnaA"/>
    <property type="match status" value="1"/>
</dbReference>
<dbReference type="Pfam" id="PF08299">
    <property type="entry name" value="Bac_DnaA_C"/>
    <property type="match status" value="1"/>
</dbReference>
<dbReference type="Pfam" id="PF11638">
    <property type="entry name" value="DnaA_N"/>
    <property type="match status" value="1"/>
</dbReference>
<dbReference type="PRINTS" id="PR00051">
    <property type="entry name" value="DNAA"/>
</dbReference>
<dbReference type="SMART" id="SM00382">
    <property type="entry name" value="AAA"/>
    <property type="match status" value="1"/>
</dbReference>
<dbReference type="SMART" id="SM00760">
    <property type="entry name" value="Bac_DnaA_C"/>
    <property type="match status" value="1"/>
</dbReference>
<dbReference type="SUPFAM" id="SSF52540">
    <property type="entry name" value="P-loop containing nucleoside triphosphate hydrolases"/>
    <property type="match status" value="1"/>
</dbReference>
<dbReference type="SUPFAM" id="SSF48295">
    <property type="entry name" value="TrpR-like"/>
    <property type="match status" value="1"/>
</dbReference>
<dbReference type="PROSITE" id="PS01008">
    <property type="entry name" value="DNAA"/>
    <property type="match status" value="1"/>
</dbReference>
<name>DNAA_OENOB</name>
<proteinExistence type="inferred from homology"/>
<keyword id="KW-0067">ATP-binding</keyword>
<keyword id="KW-0963">Cytoplasm</keyword>
<keyword id="KW-0235">DNA replication</keyword>
<keyword id="KW-0238">DNA-binding</keyword>
<keyword id="KW-0446">Lipid-binding</keyword>
<keyword id="KW-0547">Nucleotide-binding</keyword>
<keyword id="KW-1185">Reference proteome</keyword>
<gene>
    <name evidence="1" type="primary">dnaA</name>
    <name type="ordered locus">OEOE_0001</name>
</gene>